<protein>
    <recommendedName>
        <fullName>Collagen alpha-2(I) chain</fullName>
    </recommendedName>
    <alternativeName>
        <fullName>Alpha-2 type I collagen</fullName>
    </alternativeName>
</protein>
<name>CO1A2_RAT</name>
<evidence type="ECO:0000250" key="1"/>
<evidence type="ECO:0000250" key="2">
    <source>
        <dbReference type="UniProtKB" id="P08123"/>
    </source>
</evidence>
<evidence type="ECO:0000250" key="3">
    <source>
        <dbReference type="UniProtKB" id="Q03692"/>
    </source>
</evidence>
<evidence type="ECO:0000255" key="4"/>
<evidence type="ECO:0000255" key="5">
    <source>
        <dbReference type="PROSITE-ProRule" id="PRU00793"/>
    </source>
</evidence>
<evidence type="ECO:0000256" key="6">
    <source>
        <dbReference type="SAM" id="MobiDB-lite"/>
    </source>
</evidence>
<evidence type="ECO:0000269" key="7">
    <source>
    </source>
</evidence>
<evidence type="ECO:0000269" key="8">
    <source>
    </source>
</evidence>
<evidence type="ECO:0000269" key="9">
    <source>
    </source>
</evidence>
<evidence type="ECO:0000305" key="10"/>
<accession>P02466</accession>
<accession>Q9R1E8</accession>
<proteinExistence type="evidence at protein level"/>
<dbReference type="EMBL" id="AF121217">
    <property type="protein sequence ID" value="AAD41775.1"/>
    <property type="molecule type" value="mRNA"/>
</dbReference>
<dbReference type="RefSeq" id="NP_445808.1">
    <property type="nucleotide sequence ID" value="NM_053356.1"/>
</dbReference>
<dbReference type="PDB" id="3HQV">
    <property type="method" value="Fiber"/>
    <property type="resolution" value="5.16 A"/>
    <property type="chains" value="B=86-1113"/>
</dbReference>
<dbReference type="PDB" id="3HR2">
    <property type="method" value="Fiber"/>
    <property type="resolution" value="5.16 A"/>
    <property type="chains" value="B=86-1113"/>
</dbReference>
<dbReference type="PDBsum" id="3HQV"/>
<dbReference type="PDBsum" id="3HR2"/>
<dbReference type="SMR" id="P02466"/>
<dbReference type="BioGRID" id="249912">
    <property type="interactions" value="2"/>
</dbReference>
<dbReference type="ComplexPortal" id="CPX-3104">
    <property type="entry name" value="Collagen type I trimer"/>
</dbReference>
<dbReference type="DIP" id="DIP-37338N"/>
<dbReference type="FunCoup" id="P02466">
    <property type="interactions" value="356"/>
</dbReference>
<dbReference type="IntAct" id="P02466">
    <property type="interactions" value="2"/>
</dbReference>
<dbReference type="STRING" id="10116.ENSRNOP00000016423"/>
<dbReference type="GlyCosmos" id="P02466">
    <property type="glycosylation" value="2 sites, No reported glycans"/>
</dbReference>
<dbReference type="GlyGen" id="P02466">
    <property type="glycosylation" value="5 sites"/>
</dbReference>
<dbReference type="iPTMnet" id="P02466"/>
<dbReference type="PhosphoSitePlus" id="P02466"/>
<dbReference type="PaxDb" id="10116-ENSRNOP00000016423"/>
<dbReference type="GeneID" id="84352"/>
<dbReference type="KEGG" id="rno:84352"/>
<dbReference type="UCSC" id="RGD:621351">
    <property type="organism name" value="rat"/>
</dbReference>
<dbReference type="AGR" id="RGD:621351"/>
<dbReference type="CTD" id="1278"/>
<dbReference type="RGD" id="621351">
    <property type="gene designation" value="Col1a2"/>
</dbReference>
<dbReference type="eggNOG" id="KOG3544">
    <property type="taxonomic scope" value="Eukaryota"/>
</dbReference>
<dbReference type="InParanoid" id="P02466"/>
<dbReference type="PhylomeDB" id="P02466"/>
<dbReference type="Reactome" id="R-RNO-114604">
    <property type="pathway name" value="GPVI-mediated activation cascade"/>
</dbReference>
<dbReference type="Reactome" id="R-RNO-1442490">
    <property type="pathway name" value="Collagen degradation"/>
</dbReference>
<dbReference type="Reactome" id="R-RNO-1474244">
    <property type="pathway name" value="Extracellular matrix organization"/>
</dbReference>
<dbReference type="Reactome" id="R-RNO-1650814">
    <property type="pathway name" value="Collagen biosynthesis and modifying enzymes"/>
</dbReference>
<dbReference type="Reactome" id="R-RNO-198933">
    <property type="pathway name" value="Immunoregulatory interactions between a Lymphoid and a non-Lymphoid cell"/>
</dbReference>
<dbReference type="Reactome" id="R-RNO-2022090">
    <property type="pathway name" value="Assembly of collagen fibrils and other multimeric structures"/>
</dbReference>
<dbReference type="Reactome" id="R-RNO-202733">
    <property type="pathway name" value="Cell surface interactions at the vascular wall"/>
</dbReference>
<dbReference type="Reactome" id="R-RNO-216083">
    <property type="pathway name" value="Integrin cell surface interactions"/>
</dbReference>
<dbReference type="Reactome" id="R-RNO-2243919">
    <property type="pathway name" value="Crosslinking of collagen fibrils"/>
</dbReference>
<dbReference type="Reactome" id="R-RNO-3000171">
    <property type="pathway name" value="Non-integrin membrane-ECM interactions"/>
</dbReference>
<dbReference type="Reactome" id="R-RNO-3000178">
    <property type="pathway name" value="ECM proteoglycans"/>
</dbReference>
<dbReference type="Reactome" id="R-RNO-430116">
    <property type="pathway name" value="GP1b-IX-V activation signalling"/>
</dbReference>
<dbReference type="Reactome" id="R-RNO-75892">
    <property type="pathway name" value="Platelet Adhesion to exposed collagen"/>
</dbReference>
<dbReference type="Reactome" id="R-RNO-76009">
    <property type="pathway name" value="Platelet Aggregation (Plug Formation)"/>
</dbReference>
<dbReference type="Reactome" id="R-RNO-8874081">
    <property type="pathway name" value="MET activates PTK2 signaling"/>
</dbReference>
<dbReference type="Reactome" id="R-RNO-8948216">
    <property type="pathway name" value="Collagen chain trimerization"/>
</dbReference>
<dbReference type="EvolutionaryTrace" id="P02466"/>
<dbReference type="PRO" id="PR:P02466"/>
<dbReference type="Proteomes" id="UP000002494">
    <property type="component" value="Unplaced"/>
</dbReference>
<dbReference type="GO" id="GO:0005581">
    <property type="term" value="C:collagen trimer"/>
    <property type="evidence" value="ECO:0000266"/>
    <property type="project" value="RGD"/>
</dbReference>
<dbReference type="GO" id="GO:0005584">
    <property type="term" value="C:collagen type I trimer"/>
    <property type="evidence" value="ECO:0000266"/>
    <property type="project" value="RGD"/>
</dbReference>
<dbReference type="GO" id="GO:0062023">
    <property type="term" value="C:collagen-containing extracellular matrix"/>
    <property type="evidence" value="ECO:0000318"/>
    <property type="project" value="GO_Central"/>
</dbReference>
<dbReference type="GO" id="GO:0005576">
    <property type="term" value="C:extracellular region"/>
    <property type="evidence" value="ECO:0000304"/>
    <property type="project" value="Reactome"/>
</dbReference>
<dbReference type="GO" id="GO:0005615">
    <property type="term" value="C:extracellular space"/>
    <property type="evidence" value="ECO:0000266"/>
    <property type="project" value="RGD"/>
</dbReference>
<dbReference type="GO" id="GO:0030020">
    <property type="term" value="F:extracellular matrix structural constituent conferring tensile strength"/>
    <property type="evidence" value="ECO:0000318"/>
    <property type="project" value="GO_Central"/>
</dbReference>
<dbReference type="GO" id="GO:0042802">
    <property type="term" value="F:identical protein binding"/>
    <property type="evidence" value="ECO:0000266"/>
    <property type="project" value="RGD"/>
</dbReference>
<dbReference type="GO" id="GO:0046872">
    <property type="term" value="F:metal ion binding"/>
    <property type="evidence" value="ECO:0007669"/>
    <property type="project" value="UniProtKB-KW"/>
</dbReference>
<dbReference type="GO" id="GO:0048407">
    <property type="term" value="F:platelet-derived growth factor binding"/>
    <property type="evidence" value="ECO:0000266"/>
    <property type="project" value="RGD"/>
</dbReference>
<dbReference type="GO" id="GO:0002020">
    <property type="term" value="F:protease binding"/>
    <property type="evidence" value="ECO:0000266"/>
    <property type="project" value="RGD"/>
</dbReference>
<dbReference type="GO" id="GO:0030674">
    <property type="term" value="F:protein-macromolecule adaptor activity"/>
    <property type="evidence" value="ECO:0000266"/>
    <property type="project" value="RGD"/>
</dbReference>
<dbReference type="GO" id="GO:0046332">
    <property type="term" value="F:SMAD binding"/>
    <property type="evidence" value="ECO:0000266"/>
    <property type="project" value="RGD"/>
</dbReference>
<dbReference type="GO" id="GO:0001568">
    <property type="term" value="P:blood vessel development"/>
    <property type="evidence" value="ECO:0000266"/>
    <property type="project" value="RGD"/>
</dbReference>
<dbReference type="GO" id="GO:0030282">
    <property type="term" value="P:bone mineralization"/>
    <property type="evidence" value="ECO:0000266"/>
    <property type="project" value="RGD"/>
</dbReference>
<dbReference type="GO" id="GO:0110096">
    <property type="term" value="P:cellular response to aldehyde"/>
    <property type="evidence" value="ECO:0000270"/>
    <property type="project" value="RGD"/>
</dbReference>
<dbReference type="GO" id="GO:0071230">
    <property type="term" value="P:cellular response to amino acid stimulus"/>
    <property type="evidence" value="ECO:0000266"/>
    <property type="project" value="RGD"/>
</dbReference>
<dbReference type="GO" id="GO:0071300">
    <property type="term" value="P:cellular response to retinoic acid"/>
    <property type="evidence" value="ECO:0000270"/>
    <property type="project" value="RGD"/>
</dbReference>
<dbReference type="GO" id="GO:0097067">
    <property type="term" value="P:cellular response to thyroid hormone stimulus"/>
    <property type="evidence" value="ECO:0000270"/>
    <property type="project" value="RGD"/>
</dbReference>
<dbReference type="GO" id="GO:0030199">
    <property type="term" value="P:collagen fibril organization"/>
    <property type="evidence" value="ECO:0000266"/>
    <property type="project" value="RGD"/>
</dbReference>
<dbReference type="GO" id="GO:0032963">
    <property type="term" value="P:collagen metabolic process"/>
    <property type="evidence" value="ECO:0000266"/>
    <property type="project" value="RGD"/>
</dbReference>
<dbReference type="GO" id="GO:0085029">
    <property type="term" value="P:extracellular matrix assembly"/>
    <property type="evidence" value="ECO:0000266"/>
    <property type="project" value="RGD"/>
</dbReference>
<dbReference type="GO" id="GO:0070208">
    <property type="term" value="P:protein heterotrimerization"/>
    <property type="evidence" value="ECO:0000266"/>
    <property type="project" value="RGD"/>
</dbReference>
<dbReference type="GO" id="GO:0008217">
    <property type="term" value="P:regulation of blood pressure"/>
    <property type="evidence" value="ECO:0000266"/>
    <property type="project" value="RGD"/>
</dbReference>
<dbReference type="GO" id="GO:0071873">
    <property type="term" value="P:response to norepinephrine"/>
    <property type="evidence" value="ECO:0000270"/>
    <property type="project" value="RGD"/>
</dbReference>
<dbReference type="GO" id="GO:0007266">
    <property type="term" value="P:Rho protein signal transduction"/>
    <property type="evidence" value="ECO:0000266"/>
    <property type="project" value="RGD"/>
</dbReference>
<dbReference type="GO" id="GO:0001501">
    <property type="term" value="P:skeletal system development"/>
    <property type="evidence" value="ECO:0000266"/>
    <property type="project" value="RGD"/>
</dbReference>
<dbReference type="GO" id="GO:0043589">
    <property type="term" value="P:skin morphogenesis"/>
    <property type="evidence" value="ECO:0000266"/>
    <property type="project" value="RGD"/>
</dbReference>
<dbReference type="GO" id="GO:0007179">
    <property type="term" value="P:transforming growth factor beta receptor signaling pathway"/>
    <property type="evidence" value="ECO:0000266"/>
    <property type="project" value="RGD"/>
</dbReference>
<dbReference type="FunFam" id="2.60.120.1000:FF:000001">
    <property type="entry name" value="Collagen alpha-1 type I chain"/>
    <property type="match status" value="1"/>
</dbReference>
<dbReference type="Gene3D" id="2.60.120.1000">
    <property type="match status" value="1"/>
</dbReference>
<dbReference type="InterPro" id="IPR008160">
    <property type="entry name" value="Collagen"/>
</dbReference>
<dbReference type="InterPro" id="IPR050149">
    <property type="entry name" value="Collagen_superfamily"/>
</dbReference>
<dbReference type="InterPro" id="IPR000885">
    <property type="entry name" value="Fib_collagen_C"/>
</dbReference>
<dbReference type="PANTHER" id="PTHR24023">
    <property type="entry name" value="COLLAGEN ALPHA"/>
    <property type="match status" value="1"/>
</dbReference>
<dbReference type="PANTHER" id="PTHR24023:SF1082">
    <property type="entry name" value="COLLAGEN TRIPLE HELIX REPEAT"/>
    <property type="match status" value="1"/>
</dbReference>
<dbReference type="Pfam" id="PF01410">
    <property type="entry name" value="COLFI"/>
    <property type="match status" value="1"/>
</dbReference>
<dbReference type="Pfam" id="PF01391">
    <property type="entry name" value="Collagen"/>
    <property type="match status" value="5"/>
</dbReference>
<dbReference type="SMART" id="SM00038">
    <property type="entry name" value="COLFI"/>
    <property type="match status" value="1"/>
</dbReference>
<dbReference type="PROSITE" id="PS51461">
    <property type="entry name" value="NC1_FIB"/>
    <property type="match status" value="1"/>
</dbReference>
<gene>
    <name type="primary">Col1a2</name>
</gene>
<reference key="1">
    <citation type="submission" date="1999-01" db="EMBL/GenBank/DDBJ databases">
        <authorList>
            <person name="Guenther D."/>
            <person name="Seibold S."/>
            <person name="Marx M."/>
        </authorList>
    </citation>
    <scope>NUCLEOTIDE SEQUENCE [MRNA]</scope>
</reference>
<reference key="2">
    <citation type="journal article" date="1967" name="Biochemistry">
        <title>The amino acid sequence of peptides from the cross-linking region of rat skin collagen.</title>
        <authorList>
            <person name="Kang A.H."/>
            <person name="Bornstein P."/>
            <person name="Piez K.A."/>
        </authorList>
    </citation>
    <scope>PROTEIN SEQUENCE OF 86-98</scope>
    <scope>ALLYSINE AT LYS-90</scope>
    <scope>PYROGLUTAMATE FORMATION AT GLN-86</scope>
    <source>
        <tissue>Skin</tissue>
    </source>
</reference>
<reference key="3">
    <citation type="journal article" date="1969" name="Biochemistry">
        <title>Isolation and characterization of the cyanogen bromide peptides from the alpha 2 chain of rat skin collagen.</title>
        <authorList>
            <person name="Fietzek P.P."/>
            <person name="Piez K.A."/>
        </authorList>
    </citation>
    <scope>PROTEIN SEQUENCE OF 99-102</scope>
    <source>
        <tissue>Skin</tissue>
    </source>
</reference>
<reference key="4">
    <citation type="journal article" date="1972" name="FEBS Lett.">
        <title>The covalent structure of collagen. Amino acid sequence of the N-terminal region of alpha 2-CB4 from calf and rat skin collagen.</title>
        <authorList>
            <person name="Fietzek P.P."/>
            <person name="Kell I."/>
            <person name="Kuehn K."/>
        </authorList>
    </citation>
    <scope>PROTEIN SEQUENCE OF 103-143</scope>
    <source>
        <tissue>Skin</tissue>
    </source>
</reference>
<reference key="5">
    <citation type="journal article" date="1971" name="Biochemistry">
        <title>Comparative studies on the amino acid sequence of the alpha 2-CB2 peptides from chick and rat skin collagens.</title>
        <authorList>
            <person name="Highberger J.H."/>
            <person name="Kang A.H."/>
            <person name="Gross J."/>
        </authorList>
    </citation>
    <scope>PROTEIN SEQUENCE OF 424-452</scope>
    <source>
        <tissue>Skin</tissue>
    </source>
</reference>
<reference key="6">
    <citation type="journal article" date="1974" name="Hoppe-Seyler's Z. Physiol. Chem.">
        <title>The covalent structure of collagen: amino acid sequence of the N-terminal region of alpha2-CB3 from rat skin collagen and alpha2-CB3.5 from calf skin collagen.</title>
        <authorList>
            <person name="Fietzek P.P."/>
            <person name="Kuehn K."/>
        </authorList>
    </citation>
    <scope>PROTEIN SEQUENCE OF 453-501</scope>
    <source>
        <tissue>Skin</tissue>
    </source>
</reference>
<reference key="7">
    <citation type="journal article" date="1973" name="FEBS Lett.">
        <title>The covalent structure of collagen: amino acid sequence of the N-terminal region of alpha 2-CB5 from rat skin collagen.</title>
        <authorList>
            <person name="Fietzek P.P."/>
            <person name="Kuehn K."/>
        </authorList>
    </citation>
    <scope>PROTEIN SEQUENCE OF 791-836</scope>
    <source>
        <tissue>Skin</tissue>
    </source>
</reference>
<reference key="8">
    <citation type="journal article" date="1970" name="Biochem. Biophys. Res. Commun.">
        <title>The order of the CNBr peptides from the alpha 2 chain of collagen.</title>
        <authorList>
            <person name="Vuust J."/>
            <person name="Lane J.M."/>
            <person name="Fietzek P.P."/>
            <person name="Miller E.J."/>
            <person name="Piez K.A."/>
        </authorList>
    </citation>
    <scope>ORDER OF CNBR PEPTIDES</scope>
</reference>
<reference key="9">
    <citation type="journal article" date="2009" name="Process Biochem.">
        <title>A new procedure for rapid, high yield purification of Type I collagen for tissue engineering.</title>
        <authorList>
            <person name="Xiong X."/>
            <person name="Ghosh R."/>
            <person name="Hiller E."/>
            <person name="Drepper F."/>
            <person name="Knapp B."/>
            <person name="Brunner H."/>
            <person name="Rupp S."/>
        </authorList>
    </citation>
    <scope>IDENTIFICATION BY MASS SPECTROMETRY</scope>
    <scope>PHOSPHORYLATION</scope>
</reference>
<reference key="10">
    <citation type="journal article" date="2009" name="Reproduction">
        <title>Identification of novel immunodominant epididymal sperm proteins using combinatorial approach.</title>
        <authorList>
            <person name="Khan S.A."/>
            <person name="Suryawanshi A.R."/>
            <person name="Ranpura S.A."/>
            <person name="Jadhav S.V."/>
            <person name="Khole V.V."/>
        </authorList>
    </citation>
    <scope>IDENTIFICATION BY MASS SPECTROMETRY</scope>
    <scope>TISSUE SPECIFICITY</scope>
</reference>
<reference key="11">
    <citation type="journal article" date="2015" name="J. Proteome Res.">
        <title>Peptidomics for studying limited proteolysis.</title>
        <authorList>
            <person name="Tsuchiya T."/>
            <person name="Osaki T."/>
            <person name="Minamino N."/>
            <person name="Sasaki K."/>
        </authorList>
    </citation>
    <scope>CLEAVAGE OF SIGNAL PEPTIDE AFTER CYS-22</scope>
    <scope>IDENTIFICATION BY MASS SPECTROMETRY</scope>
</reference>
<reference key="12">
    <citation type="journal article" date="2006" name="Proc. Natl. Acad. Sci. U.S.A.">
        <title>Microfibrillar structure of type I collagen in situ.</title>
        <authorList>
            <person name="Orgel J.P.R.O."/>
            <person name="Irving T.C."/>
            <person name="Miller A."/>
            <person name="Wess T.J."/>
        </authorList>
    </citation>
    <scope>X-RAY CRYSTALLOGRAPHY (5.16 ANGSTROMS) OF 86-1113</scope>
</reference>
<sequence>MLSFVDTRTLLLLAVTSCLATCQSLQMGSVRKGPTGDRGPRGQRGPAGPRGRDGVDGPVGPPGPPGAPGPPGPPGPPGLTGNFAAQYSDKGVSAGPGPMGLMGPRGPPGAVGAPGPQGFQGPAGEPGEPGQTGPAGSRGPAGPPGKAGEDGHPGKPGRPGERGVVGPQGARGFPGTPGLPGFKGIRGHNGLDGLKGQPGAQGVKGEPGAPGENGTPGQAGARGLPGERGRVGAPGPAGARGSDGSVGPVGPAGPIGSAGPPGFPGAPGPKGELGPVGNPGPAGPAGPRGEAGLPGLSGPVGPPGNPGANGLTGAKGATGLPGVAGAPGLPGPRGIPGPVGAAGATGPRGLVGEPGPAGSKGETGNKGEPGSAGAQGPPGPSGEEGKRGSPGEPGSAGPAGPPGLRGSPGSRGLPGADGRAGVMGPPGNRGSTGPAGVRGPNGDAGRPGEPGLMGPRGLPGSPGNVGPAGKEGPVGLPGIDGRPGPIGPAGPRGEAGNIGFPGPKGPSGDPGKPGEKGHPGLAGARGAPGPDGNNGAQGPPGPQGVQGGKGEQGPAGPPGFQGLPGPSGTAGEVGKPGERGLPGEFGLPGPAGPRGERGPPGESGAAGPSGPIGIRGPSGAPGPDGNKGEAGAVGAPGSAGASGPGGLPGERGAAGIPGGKGEKGETGLRGEIGNPGRDGARGAPGAIGAPGPAGASGDRGEAGAAGPSGPAGPRGSPGERGEVGPAGPNGFAGPAGSAGQPGAKGEKGTKGPKGENGIVGPTGPVGAAGPSGPNGPPGPAGSRGDGGPPGMTGFPGAAGRTGPPGPSGITGPPGPPGAAGKEGIRGPRGDQGPVGRTGEIGASGPPGFAGEKGPSGEPGTTGPPGTAGPQGLLGAPGILGLPGSRGERGQPGIAGALGEPGPLGIAGPPGARGPPGAVGSPGVNGAPGEAGRDGNPGSDGPPGRDGQPGHKGERGYPGNIGPTGAAGAPGPHGSVGPAGKHGNRGEPGPAGSVGPVGAVGPRGPSGPQGIRGDKGEPGDKGARGLPGLKGHNGLQGLPGLAGLHGDQGAPGPVGPAGPRGPAGPSGPIGKDGRSGHPGPVGPAGVRGSQGSQGPAGPPGPPGPPGPPGVSGGGYDFGFEGGFYRADQPRSQPSLRPKDYEVDATLKSLNNQIETLLTPEGSRKNPARTCRDLRLSHPEWKSDYYWIDPNQGCTMDAIKVYCDFSTGETCIQAQPVNTPAKNAYSRAQANKHVWLGETINGGSQFEYNAEGVSSKEMATQLAFMRLLANRASQNITYHCKNSIAYLDEETGRLNKAVILQGSNDVELVAEGNSRFTYTVLVDGCSKKTNEWDKTVIEYKTNKPSRLPFLDIAPLDIGGTNQEFRVEVGPVCFK</sequence>
<feature type="signal peptide" evidence="8">
    <location>
        <begin position="1"/>
        <end position="22"/>
    </location>
</feature>
<feature type="propeptide" id="PRO_0000005812" description="N-terminal propeptide" evidence="2">
    <location>
        <begin position="23"/>
        <end position="85"/>
    </location>
</feature>
<feature type="chain" id="PRO_0000005813" description="Collagen alpha-2(I) chain">
    <location>
        <begin position="86"/>
        <end position="1125"/>
    </location>
</feature>
<feature type="propeptide" id="PRO_0000005814" description="C-terminal propeptide" evidence="2">
    <location>
        <begin position="1126"/>
        <end position="1372"/>
    </location>
</feature>
<feature type="domain" description="Fibrillar collagen NC1" evidence="5">
    <location>
        <begin position="1139"/>
        <end position="1372"/>
    </location>
</feature>
<feature type="region of interest" description="Disordered" evidence="6">
    <location>
        <begin position="28"/>
        <end position="1135"/>
    </location>
</feature>
<feature type="short sequence motif" description="Cell attachment site" evidence="4">
    <location>
        <begin position="783"/>
        <end position="785"/>
    </location>
</feature>
<feature type="short sequence motif" description="Cell attachment site" evidence="4">
    <location>
        <begin position="828"/>
        <end position="830"/>
    </location>
</feature>
<feature type="short sequence motif" description="Cell attachment site" evidence="4">
    <location>
        <begin position="1011"/>
        <end position="1013"/>
    </location>
</feature>
<feature type="compositionally biased region" description="Pro residues" evidence="6">
    <location>
        <begin position="59"/>
        <end position="77"/>
    </location>
</feature>
<feature type="compositionally biased region" description="Low complexity" evidence="6">
    <location>
        <begin position="95"/>
        <end position="146"/>
    </location>
</feature>
<feature type="compositionally biased region" description="Basic and acidic residues" evidence="6">
    <location>
        <begin position="147"/>
        <end position="161"/>
    </location>
</feature>
<feature type="compositionally biased region" description="Low complexity" evidence="6">
    <location>
        <begin position="231"/>
        <end position="260"/>
    </location>
</feature>
<feature type="compositionally biased region" description="Low complexity" evidence="6">
    <location>
        <begin position="285"/>
        <end position="299"/>
    </location>
</feature>
<feature type="compositionally biased region" description="Low complexity" evidence="6">
    <location>
        <begin position="306"/>
        <end position="327"/>
    </location>
</feature>
<feature type="compositionally biased region" description="Low complexity" evidence="6">
    <location>
        <begin position="336"/>
        <end position="348"/>
    </location>
</feature>
<feature type="compositionally biased region" description="Low complexity" evidence="6">
    <location>
        <begin position="390"/>
        <end position="416"/>
    </location>
</feature>
<feature type="compositionally biased region" description="Low complexity" evidence="6">
    <location>
        <begin position="476"/>
        <end position="495"/>
    </location>
</feature>
<feature type="compositionally biased region" description="Low complexity" evidence="6">
    <location>
        <begin position="519"/>
        <end position="537"/>
    </location>
</feature>
<feature type="compositionally biased region" description="Gly residues" evidence="6">
    <location>
        <begin position="544"/>
        <end position="553"/>
    </location>
</feature>
<feature type="compositionally biased region" description="Low complexity" evidence="6">
    <location>
        <begin position="600"/>
        <end position="639"/>
    </location>
</feature>
<feature type="compositionally biased region" description="Gly residues" evidence="6">
    <location>
        <begin position="640"/>
        <end position="649"/>
    </location>
</feature>
<feature type="compositionally biased region" description="Low complexity" evidence="6">
    <location>
        <begin position="674"/>
        <end position="716"/>
    </location>
</feature>
<feature type="compositionally biased region" description="Low complexity" evidence="6">
    <location>
        <begin position="725"/>
        <end position="743"/>
    </location>
</feature>
<feature type="compositionally biased region" description="Basic and acidic residues" evidence="6">
    <location>
        <begin position="744"/>
        <end position="753"/>
    </location>
</feature>
<feature type="compositionally biased region" description="Low complexity" evidence="6">
    <location>
        <begin position="755"/>
        <end position="771"/>
    </location>
</feature>
<feature type="compositionally biased region" description="Gly residues" evidence="6">
    <location>
        <begin position="781"/>
        <end position="790"/>
    </location>
</feature>
<feature type="compositionally biased region" description="Low complexity" evidence="6">
    <location>
        <begin position="792"/>
        <end position="801"/>
    </location>
</feature>
<feature type="compositionally biased region" description="Low complexity" evidence="6">
    <location>
        <begin position="855"/>
        <end position="882"/>
    </location>
</feature>
<feature type="compositionally biased region" description="Low complexity" evidence="6">
    <location>
        <begin position="891"/>
        <end position="927"/>
    </location>
</feature>
<feature type="compositionally biased region" description="Low complexity" evidence="6">
    <location>
        <begin position="957"/>
        <end position="978"/>
    </location>
</feature>
<feature type="compositionally biased region" description="Low complexity" evidence="6">
    <location>
        <begin position="987"/>
        <end position="1007"/>
    </location>
</feature>
<feature type="compositionally biased region" description="Basic and acidic residues" evidence="6">
    <location>
        <begin position="1011"/>
        <end position="1022"/>
    </location>
</feature>
<feature type="compositionally biased region" description="Pro residues" evidence="6">
    <location>
        <begin position="1095"/>
        <end position="1107"/>
    </location>
</feature>
<feature type="compositionally biased region" description="Gly residues" evidence="6">
    <location>
        <begin position="1108"/>
        <end position="1120"/>
    </location>
</feature>
<feature type="binding site" evidence="3">
    <location>
        <position position="1187"/>
    </location>
    <ligand>
        <name>Ca(2+)</name>
        <dbReference type="ChEBI" id="CHEBI:29108"/>
    </ligand>
</feature>
<feature type="binding site" evidence="3">
    <location>
        <position position="1189"/>
    </location>
    <ligand>
        <name>Ca(2+)</name>
        <dbReference type="ChEBI" id="CHEBI:29108"/>
    </ligand>
</feature>
<feature type="binding site" evidence="3">
    <location>
        <position position="1190"/>
    </location>
    <ligand>
        <name>Ca(2+)</name>
        <dbReference type="ChEBI" id="CHEBI:29108"/>
    </ligand>
</feature>
<feature type="binding site" evidence="3">
    <location>
        <position position="1192"/>
    </location>
    <ligand>
        <name>Ca(2+)</name>
        <dbReference type="ChEBI" id="CHEBI:29108"/>
    </ligand>
</feature>
<feature type="binding site" evidence="3">
    <location>
        <position position="1195"/>
    </location>
    <ligand>
        <name>Ca(2+)</name>
        <dbReference type="ChEBI" id="CHEBI:29108"/>
    </ligand>
</feature>
<feature type="modified residue" description="Pyrrolidone carboxylic acid" evidence="2">
    <location>
        <position position="23"/>
    </location>
</feature>
<feature type="modified residue" description="Pyrrolidone carboxylic acid" evidence="9">
    <location>
        <position position="86"/>
    </location>
</feature>
<feature type="modified residue" description="Allysine" evidence="9">
    <location>
        <position position="90"/>
    </location>
</feature>
<feature type="modified residue" description="5-hydroxylysine; alternate" evidence="2">
    <location>
        <position position="183"/>
    </location>
</feature>
<feature type="glycosylation site" description="O-linked (Gal...) hydroxylysine; alternate" evidence="2">
    <location>
        <position position="183"/>
    </location>
</feature>
<feature type="glycosylation site" description="N-linked (GlcNAc...) asparagine" evidence="4">
    <location>
        <position position="1273"/>
    </location>
</feature>
<feature type="disulfide bond" evidence="5">
    <location>
        <begin position="1169"/>
        <end position="1201"/>
    </location>
</feature>
<feature type="disulfide bond" evidence="5">
    <location>
        <begin position="1209"/>
        <end position="1370"/>
    </location>
</feature>
<feature type="disulfide bond" evidence="5">
    <location>
        <begin position="1278"/>
        <end position="1323"/>
    </location>
</feature>
<feature type="sequence conflict" description="In Ref. 4; AA sequence." evidence="10" ref="4">
    <original>T</original>
    <variation>P</variation>
    <location>
        <position position="132"/>
    </location>
</feature>
<feature type="sequence conflict" description="In Ref. 4; AA sequence." evidence="10" ref="4">
    <original>S</original>
    <variation>P</variation>
    <location>
        <position position="137"/>
    </location>
</feature>
<feature type="sequence conflict" description="In Ref. 5; AA sequence." evidence="10" ref="5">
    <original>ST</original>
    <variation>TS</variation>
    <location>
        <begin position="431"/>
        <end position="432"/>
    </location>
</feature>
<feature type="sequence conflict" description="In Ref. 6; AA sequence." evidence="10" ref="6">
    <original>E</original>
    <variation>Z</variation>
    <location>
        <position position="494"/>
    </location>
</feature>
<feature type="sequence conflict" description="In Ref. 6; AA sequence." evidence="10" ref="6">
    <original>N</original>
    <variation>A</variation>
    <location>
        <position position="497"/>
    </location>
</feature>
<feature type="sequence conflict" description="In Ref. 7; AA sequence." evidence="10" ref="7">
    <original>R</original>
    <variation>K</variation>
    <location>
        <position position="825"/>
    </location>
</feature>
<comment type="function">
    <text>Type I collagen is a member of group I collagen (fibrillar forming collagen).</text>
</comment>
<comment type="subunit">
    <text evidence="2">Trimers of one alpha 2(I) and two alpha 1(I) chains. Interacts (via C-terminus) with TMEM131 (via PapD-L domain); the interaction is direct and is involved in assembly and TRAPPIII ER-to-Golgi transport complex-dependent secretion of collagen.</text>
</comment>
<comment type="subcellular location">
    <subcellularLocation>
        <location evidence="5">Secreted</location>
        <location evidence="5">Extracellular space</location>
        <location evidence="5">Extracellular matrix</location>
    </subcellularLocation>
</comment>
<comment type="tissue specificity">
    <text evidence="7">Forms the fibrils of tendon, ligaments and bones. In bones the fibrils are mineralized with calcium hydroxyapatite. Expressed in flagella of epididymal sperm.</text>
</comment>
<comment type="domain">
    <text evidence="1">The C-terminal propeptide, also known as COLFI domain, have crucial roles in tissue growth and repair by controlling both the intracellular assembly of procollagen molecules and the extracellular assembly of collagen fibrils. It binds a calcium ion which is essential for its function.</text>
</comment>
<comment type="PTM">
    <text>Proline residues at the third position of the tripeptide repeating unit (G-X-P) are hydroxylated in some or all of the chains. Proline residues at the second position of the tripeptide repeating unit (G-P-X) are hydroxylated in some of the chains.</text>
</comment>
<comment type="similarity">
    <text evidence="5">Belongs to the fibrillar collagen family.</text>
</comment>
<organism>
    <name type="scientific">Rattus norvegicus</name>
    <name type="common">Rat</name>
    <dbReference type="NCBI Taxonomy" id="10116"/>
    <lineage>
        <taxon>Eukaryota</taxon>
        <taxon>Metazoa</taxon>
        <taxon>Chordata</taxon>
        <taxon>Craniata</taxon>
        <taxon>Vertebrata</taxon>
        <taxon>Euteleostomi</taxon>
        <taxon>Mammalia</taxon>
        <taxon>Eutheria</taxon>
        <taxon>Euarchontoglires</taxon>
        <taxon>Glires</taxon>
        <taxon>Rodentia</taxon>
        <taxon>Myomorpha</taxon>
        <taxon>Muroidea</taxon>
        <taxon>Muridae</taxon>
        <taxon>Murinae</taxon>
        <taxon>Rattus</taxon>
    </lineage>
</organism>
<keyword id="KW-0002">3D-structure</keyword>
<keyword id="KW-0106">Calcium</keyword>
<keyword id="KW-0176">Collagen</keyword>
<keyword id="KW-0903">Direct protein sequencing</keyword>
<keyword id="KW-1015">Disulfide bond</keyword>
<keyword id="KW-0272">Extracellular matrix</keyword>
<keyword id="KW-0325">Glycoprotein</keyword>
<keyword id="KW-0379">Hydroxylation</keyword>
<keyword id="KW-0479">Metal-binding</keyword>
<keyword id="KW-0873">Pyrrolidone carboxylic acid</keyword>
<keyword id="KW-1185">Reference proteome</keyword>
<keyword id="KW-0677">Repeat</keyword>
<keyword id="KW-0964">Secreted</keyword>
<keyword id="KW-0732">Signal</keyword>